<evidence type="ECO:0000255" key="1">
    <source>
        <dbReference type="HAMAP-Rule" id="MF_00129"/>
    </source>
</evidence>
<comment type="function">
    <text evidence="1">NAD-binding protein involved in the addition of a carboxymethylaminomethyl (cmnm) group at the wobble position (U34) of certain tRNAs, forming tRNA-cmnm(5)s(2)U34.</text>
</comment>
<comment type="cofactor">
    <cofactor evidence="1">
        <name>FAD</name>
        <dbReference type="ChEBI" id="CHEBI:57692"/>
    </cofactor>
</comment>
<comment type="subunit">
    <text evidence="1">Homodimer. Heterotetramer of two MnmE and two MnmG subunits.</text>
</comment>
<comment type="subcellular location">
    <subcellularLocation>
        <location evidence="1">Cytoplasm</location>
    </subcellularLocation>
</comment>
<comment type="similarity">
    <text evidence="1">Belongs to the MnmG family.</text>
</comment>
<name>MNMG_METFK</name>
<reference key="1">
    <citation type="submission" date="2006-03" db="EMBL/GenBank/DDBJ databases">
        <title>Complete sequence of Methylobacillus flagellatus KT.</title>
        <authorList>
            <consortium name="US DOE Joint Genome Institute"/>
            <person name="Copeland A."/>
            <person name="Lucas S."/>
            <person name="Lapidus A."/>
            <person name="Barry K."/>
            <person name="Detter J.C."/>
            <person name="Glavina del Rio T."/>
            <person name="Hammon N."/>
            <person name="Israni S."/>
            <person name="Dalin E."/>
            <person name="Tice H."/>
            <person name="Pitluck S."/>
            <person name="Brettin T."/>
            <person name="Bruce D."/>
            <person name="Han C."/>
            <person name="Tapia R."/>
            <person name="Saunders E."/>
            <person name="Gilna P."/>
            <person name="Schmutz J."/>
            <person name="Larimer F."/>
            <person name="Land M."/>
            <person name="Kyrpides N."/>
            <person name="Anderson I."/>
            <person name="Richardson P."/>
        </authorList>
    </citation>
    <scope>NUCLEOTIDE SEQUENCE [LARGE SCALE GENOMIC DNA]</scope>
    <source>
        <strain>ATCC 51484 / DSM 6875 / VKM B-1610 / KT</strain>
    </source>
</reference>
<sequence length="634" mass="70253">MRFSEKFDVIIVGGGHAGTEAALASARMGQKTLLLTHNIETLGQMSCNPSIGGIGKGHLVKEVDALGGAMAAATDEGGIQFRILNSSKGPAVRATRAQADRVLYKAAIRRRLENQPNLWLFQQAVDDIILEGERVAGVVTQLGLRFESKAVVLTAGTFLAGLVHVGLANYQAGRAGDPPAVSLAARLREIGLPAGRLKTGTPPRIDGRTIDYSVMAEQPGDSPVPVFSFLGSAEQHPAQLPCWITFTNEKTHDIIRSGLDRSPMYTGVIEGVGPRYCPSVEDKIHRFADKDSHQVFLEPEGLTTNEIYPNGISTSLPFDIQYQLVRSIKGLENAHILRPGYAIEYDYYDPRGLKSSLETKAIRGLFFAGQINGTTGYEEAAAQGLLAGANAALYAQEKDAWWPTRDQAYLGVLVDDLITRGVSEPYRMFTSRAEYRLMLREDNADMRLTEAGRKLGLVDDVRWEAFQRKQEAIEREQQRLRRTFIHPQHVPQEQLQQVFGKVLEREYSMFELLRRPEVSYEALLSLPQAGEGEADPQVRQQLEIVAKYQGYIDRQAEEIERLKESEHYRLPLNMDYSEVHGLSIEVQQKLNKQKPETIGQAGRISGVTPAAVSLLLVHLKRKSRKAGNTADQVA</sequence>
<dbReference type="EMBL" id="CP000284">
    <property type="protein sequence ID" value="ABE51018.1"/>
    <property type="molecule type" value="Genomic_DNA"/>
</dbReference>
<dbReference type="RefSeq" id="WP_011480971.1">
    <property type="nucleotide sequence ID" value="NC_007947.1"/>
</dbReference>
<dbReference type="SMR" id="Q1GXL9"/>
<dbReference type="STRING" id="265072.Mfla_2755"/>
<dbReference type="KEGG" id="mfa:Mfla_2755"/>
<dbReference type="eggNOG" id="COG0445">
    <property type="taxonomic scope" value="Bacteria"/>
</dbReference>
<dbReference type="HOGENOM" id="CLU_007831_2_2_4"/>
<dbReference type="OrthoDB" id="9815560at2"/>
<dbReference type="Proteomes" id="UP000002440">
    <property type="component" value="Chromosome"/>
</dbReference>
<dbReference type="GO" id="GO:0005829">
    <property type="term" value="C:cytosol"/>
    <property type="evidence" value="ECO:0007669"/>
    <property type="project" value="TreeGrafter"/>
</dbReference>
<dbReference type="GO" id="GO:0050660">
    <property type="term" value="F:flavin adenine dinucleotide binding"/>
    <property type="evidence" value="ECO:0007669"/>
    <property type="project" value="UniProtKB-UniRule"/>
</dbReference>
<dbReference type="GO" id="GO:0030488">
    <property type="term" value="P:tRNA methylation"/>
    <property type="evidence" value="ECO:0007669"/>
    <property type="project" value="TreeGrafter"/>
</dbReference>
<dbReference type="GO" id="GO:0002098">
    <property type="term" value="P:tRNA wobble uridine modification"/>
    <property type="evidence" value="ECO:0007669"/>
    <property type="project" value="InterPro"/>
</dbReference>
<dbReference type="FunFam" id="1.10.10.1800:FF:000001">
    <property type="entry name" value="tRNA uridine 5-carboxymethylaminomethyl modification enzyme MnmG"/>
    <property type="match status" value="1"/>
</dbReference>
<dbReference type="FunFam" id="1.10.150.570:FF:000001">
    <property type="entry name" value="tRNA uridine 5-carboxymethylaminomethyl modification enzyme MnmG"/>
    <property type="match status" value="1"/>
</dbReference>
<dbReference type="FunFam" id="3.50.50.60:FF:000002">
    <property type="entry name" value="tRNA uridine 5-carboxymethylaminomethyl modification enzyme MnmG"/>
    <property type="match status" value="1"/>
</dbReference>
<dbReference type="FunFam" id="3.50.50.60:FF:000010">
    <property type="entry name" value="tRNA uridine 5-carboxymethylaminomethyl modification enzyme MnmG"/>
    <property type="match status" value="1"/>
</dbReference>
<dbReference type="Gene3D" id="3.50.50.60">
    <property type="entry name" value="FAD/NAD(P)-binding domain"/>
    <property type="match status" value="2"/>
</dbReference>
<dbReference type="Gene3D" id="1.10.150.570">
    <property type="entry name" value="GidA associated domain, C-terminal subdomain"/>
    <property type="match status" value="1"/>
</dbReference>
<dbReference type="Gene3D" id="1.10.10.1800">
    <property type="entry name" value="tRNA uridine 5-carboxymethylaminomethyl modification enzyme MnmG/GidA"/>
    <property type="match status" value="1"/>
</dbReference>
<dbReference type="HAMAP" id="MF_00129">
    <property type="entry name" value="MnmG_GidA"/>
    <property type="match status" value="1"/>
</dbReference>
<dbReference type="InterPro" id="IPR036188">
    <property type="entry name" value="FAD/NAD-bd_sf"/>
</dbReference>
<dbReference type="InterPro" id="IPR049312">
    <property type="entry name" value="GIDA_C_N"/>
</dbReference>
<dbReference type="InterPro" id="IPR004416">
    <property type="entry name" value="MnmG"/>
</dbReference>
<dbReference type="InterPro" id="IPR002218">
    <property type="entry name" value="MnmG-rel"/>
</dbReference>
<dbReference type="InterPro" id="IPR020595">
    <property type="entry name" value="MnmG-rel_CS"/>
</dbReference>
<dbReference type="InterPro" id="IPR026904">
    <property type="entry name" value="MnmG_C"/>
</dbReference>
<dbReference type="InterPro" id="IPR047001">
    <property type="entry name" value="MnmG_C_subdom"/>
</dbReference>
<dbReference type="InterPro" id="IPR044920">
    <property type="entry name" value="MnmG_C_subdom_sf"/>
</dbReference>
<dbReference type="InterPro" id="IPR040131">
    <property type="entry name" value="MnmG_N"/>
</dbReference>
<dbReference type="NCBIfam" id="TIGR00136">
    <property type="entry name" value="mnmG_gidA"/>
    <property type="match status" value="1"/>
</dbReference>
<dbReference type="PANTHER" id="PTHR11806">
    <property type="entry name" value="GLUCOSE INHIBITED DIVISION PROTEIN A"/>
    <property type="match status" value="1"/>
</dbReference>
<dbReference type="PANTHER" id="PTHR11806:SF0">
    <property type="entry name" value="PROTEIN MTO1 HOMOLOG, MITOCHONDRIAL"/>
    <property type="match status" value="1"/>
</dbReference>
<dbReference type="Pfam" id="PF01134">
    <property type="entry name" value="GIDA"/>
    <property type="match status" value="1"/>
</dbReference>
<dbReference type="Pfam" id="PF21680">
    <property type="entry name" value="GIDA_C_1st"/>
    <property type="match status" value="1"/>
</dbReference>
<dbReference type="Pfam" id="PF13932">
    <property type="entry name" value="SAM_GIDA_C"/>
    <property type="match status" value="1"/>
</dbReference>
<dbReference type="SMART" id="SM01228">
    <property type="entry name" value="GIDA_assoc_3"/>
    <property type="match status" value="1"/>
</dbReference>
<dbReference type="SUPFAM" id="SSF51905">
    <property type="entry name" value="FAD/NAD(P)-binding domain"/>
    <property type="match status" value="1"/>
</dbReference>
<dbReference type="PROSITE" id="PS01280">
    <property type="entry name" value="GIDA_1"/>
    <property type="match status" value="1"/>
</dbReference>
<dbReference type="PROSITE" id="PS01281">
    <property type="entry name" value="GIDA_2"/>
    <property type="match status" value="1"/>
</dbReference>
<protein>
    <recommendedName>
        <fullName evidence="1">tRNA uridine 5-carboxymethylaminomethyl modification enzyme MnmG</fullName>
    </recommendedName>
    <alternativeName>
        <fullName evidence="1">Glucose-inhibited division protein A</fullName>
    </alternativeName>
</protein>
<accession>Q1GXL9</accession>
<feature type="chain" id="PRO_1000016621" description="tRNA uridine 5-carboxymethylaminomethyl modification enzyme MnmG">
    <location>
        <begin position="1"/>
        <end position="634"/>
    </location>
</feature>
<feature type="binding site" evidence="1">
    <location>
        <begin position="13"/>
        <end position="18"/>
    </location>
    <ligand>
        <name>FAD</name>
        <dbReference type="ChEBI" id="CHEBI:57692"/>
    </ligand>
</feature>
<feature type="binding site" evidence="1">
    <location>
        <begin position="273"/>
        <end position="287"/>
    </location>
    <ligand>
        <name>NAD(+)</name>
        <dbReference type="ChEBI" id="CHEBI:57540"/>
    </ligand>
</feature>
<organism>
    <name type="scientific">Methylobacillus flagellatus (strain ATCC 51484 / DSM 6875 / VKM B-1610 / KT)</name>
    <dbReference type="NCBI Taxonomy" id="265072"/>
    <lineage>
        <taxon>Bacteria</taxon>
        <taxon>Pseudomonadati</taxon>
        <taxon>Pseudomonadota</taxon>
        <taxon>Betaproteobacteria</taxon>
        <taxon>Nitrosomonadales</taxon>
        <taxon>Methylophilaceae</taxon>
        <taxon>Methylobacillus</taxon>
    </lineage>
</organism>
<gene>
    <name evidence="1" type="primary">mnmG</name>
    <name evidence="1" type="synonym">gidA</name>
    <name type="ordered locus">Mfla_2755</name>
</gene>
<proteinExistence type="inferred from homology"/>
<keyword id="KW-0963">Cytoplasm</keyword>
<keyword id="KW-0274">FAD</keyword>
<keyword id="KW-0285">Flavoprotein</keyword>
<keyword id="KW-0520">NAD</keyword>
<keyword id="KW-1185">Reference proteome</keyword>
<keyword id="KW-0819">tRNA processing</keyword>